<organism>
    <name type="scientific">Halobacterium salinarum (strain ATCC 700922 / JCM 11081 / NRC-1)</name>
    <name type="common">Halobacterium halobium</name>
    <dbReference type="NCBI Taxonomy" id="64091"/>
    <lineage>
        <taxon>Archaea</taxon>
        <taxon>Methanobacteriati</taxon>
        <taxon>Methanobacteriota</taxon>
        <taxon>Stenosarchaea group</taxon>
        <taxon>Halobacteria</taxon>
        <taxon>Halobacteriales</taxon>
        <taxon>Halobacteriaceae</taxon>
        <taxon>Halobacterium</taxon>
        <taxon>Halobacterium salinarum NRC-34001</taxon>
    </lineage>
</organism>
<dbReference type="EC" id="4.6.1.16" evidence="2"/>
<dbReference type="EMBL" id="AE004437">
    <property type="protein sequence ID" value="AAG20339.1"/>
    <property type="molecule type" value="Genomic_DNA"/>
</dbReference>
<dbReference type="PIR" id="G84371">
    <property type="entry name" value="G84371"/>
</dbReference>
<dbReference type="RefSeq" id="WP_010903640.1">
    <property type="nucleotide sequence ID" value="NC_002607.1"/>
</dbReference>
<dbReference type="SMR" id="Q9HN82"/>
<dbReference type="STRING" id="64091.VNG_2210G"/>
<dbReference type="PaxDb" id="64091-VNG_2210G"/>
<dbReference type="GeneID" id="68694770"/>
<dbReference type="KEGG" id="hal:VNG_2210G"/>
<dbReference type="PATRIC" id="fig|64091.14.peg.1699"/>
<dbReference type="HOGENOM" id="CLU_791347_0_0_2"/>
<dbReference type="InParanoid" id="Q9HN82"/>
<dbReference type="OrthoDB" id="46045at2157"/>
<dbReference type="PhylomeDB" id="Q9HN82"/>
<dbReference type="Proteomes" id="UP000000554">
    <property type="component" value="Chromosome"/>
</dbReference>
<dbReference type="GO" id="GO:0005737">
    <property type="term" value="C:cytoplasm"/>
    <property type="evidence" value="ECO:0000318"/>
    <property type="project" value="GO_Central"/>
</dbReference>
<dbReference type="GO" id="GO:0004519">
    <property type="term" value="F:endonuclease activity"/>
    <property type="evidence" value="ECO:0000318"/>
    <property type="project" value="GO_Central"/>
</dbReference>
<dbReference type="GO" id="GO:0016829">
    <property type="term" value="F:lyase activity"/>
    <property type="evidence" value="ECO:0007669"/>
    <property type="project" value="UniProtKB-KW"/>
</dbReference>
<dbReference type="GO" id="GO:0003676">
    <property type="term" value="F:nucleic acid binding"/>
    <property type="evidence" value="ECO:0007669"/>
    <property type="project" value="InterPro"/>
</dbReference>
<dbReference type="GO" id="GO:0000213">
    <property type="term" value="F:tRNA-intron endonuclease activity"/>
    <property type="evidence" value="ECO:0007669"/>
    <property type="project" value="UniProtKB-UniRule"/>
</dbReference>
<dbReference type="GO" id="GO:0008033">
    <property type="term" value="P:tRNA processing"/>
    <property type="evidence" value="ECO:0000318"/>
    <property type="project" value="GO_Central"/>
</dbReference>
<dbReference type="GO" id="GO:0006388">
    <property type="term" value="P:tRNA splicing, via endonucleolytic cleavage and ligation"/>
    <property type="evidence" value="ECO:0007669"/>
    <property type="project" value="UniProtKB-UniRule"/>
</dbReference>
<dbReference type="CDD" id="cd22363">
    <property type="entry name" value="tRNA-intron_lyase_C"/>
    <property type="match status" value="2"/>
</dbReference>
<dbReference type="FunFam" id="3.40.1350.10:FF:000006">
    <property type="entry name" value="tRNA-splicing endonuclease"/>
    <property type="match status" value="1"/>
</dbReference>
<dbReference type="Gene3D" id="3.40.1350.10">
    <property type="match status" value="2"/>
</dbReference>
<dbReference type="Gene3D" id="3.40.1170.20">
    <property type="entry name" value="tRNA intron endonuclease, N-terminal domain"/>
    <property type="match status" value="2"/>
</dbReference>
<dbReference type="HAMAP" id="MF_01834">
    <property type="entry name" value="EndA_long"/>
    <property type="match status" value="1"/>
</dbReference>
<dbReference type="InterPro" id="IPR011856">
    <property type="entry name" value="tRNA_endonuc-like_dom_sf"/>
</dbReference>
<dbReference type="InterPro" id="IPR036167">
    <property type="entry name" value="tRNA_intron_Endo_cat-like_sf"/>
</dbReference>
<dbReference type="InterPro" id="IPR006677">
    <property type="entry name" value="tRNA_intron_Endonuc_cat-like"/>
</dbReference>
<dbReference type="InterPro" id="IPR006678">
    <property type="entry name" value="tRNA_intron_Endonuc_N"/>
</dbReference>
<dbReference type="InterPro" id="IPR036740">
    <property type="entry name" value="tRNA_intron_Endonuc_N_sf"/>
</dbReference>
<dbReference type="InterPro" id="IPR006676">
    <property type="entry name" value="tRNA_splic"/>
</dbReference>
<dbReference type="InterPro" id="IPR023516">
    <property type="entry name" value="tRNA_splic_arch_long"/>
</dbReference>
<dbReference type="NCBIfam" id="TIGR00324">
    <property type="entry name" value="endA"/>
    <property type="match status" value="1"/>
</dbReference>
<dbReference type="NCBIfam" id="NF006794">
    <property type="entry name" value="PRK09300.1-1"/>
    <property type="match status" value="1"/>
</dbReference>
<dbReference type="PANTHER" id="PTHR21227">
    <property type="entry name" value="TRNA-SPLICING ENDONUCLEASE SUBUNIT SEN2"/>
    <property type="match status" value="1"/>
</dbReference>
<dbReference type="PANTHER" id="PTHR21227:SF0">
    <property type="entry name" value="TRNA-SPLICING ENDONUCLEASE SUBUNIT SEN2"/>
    <property type="match status" value="1"/>
</dbReference>
<dbReference type="Pfam" id="PF01974">
    <property type="entry name" value="tRNA_int_endo"/>
    <property type="match status" value="1"/>
</dbReference>
<dbReference type="Pfam" id="PF02778">
    <property type="entry name" value="tRNA_int_endo_N"/>
    <property type="match status" value="2"/>
</dbReference>
<dbReference type="SUPFAM" id="SSF53032">
    <property type="entry name" value="tRNA-intron endonuclease catalytic domain-like"/>
    <property type="match status" value="2"/>
</dbReference>
<dbReference type="SUPFAM" id="SSF55267">
    <property type="entry name" value="tRNA-intron endonuclease N-terminal domain-like"/>
    <property type="match status" value="2"/>
</dbReference>
<protein>
    <recommendedName>
        <fullName evidence="2">tRNA-splicing endonuclease</fullName>
        <ecNumber evidence="2">4.6.1.16</ecNumber>
    </recommendedName>
    <alternativeName>
        <fullName evidence="2">tRNA-intron endonuclease</fullName>
    </alternativeName>
</protein>
<sequence length="343" mass="37872">MDGDLRGDTVHIGGDARQRFHDARGYGYPLGGNDIAVSLVEAAHLLFRGDLDSVDGMGFRAFLTDREAGFAARFLVYVDLRDRGFYLVPDRDPWWRDPGDGDFVVFPRGNTRRDGVVKHRVRVVDERTTLPVDGLSESVLAVVDEESEITYLDIAPETPTGETTLDRPTDVPGVLLDDRVLVWEPPQRLHNAGFYGQPLGGRAADHDALQLSLVEAAYLIDAGVLRLTDATIDDVRARGRLGEGEHFDCRLAVYRALRDAGAVPKTGFKFGADFRVYSAVSSVDDLGHSELLVRVITDTHVFSPGDLSLDVRLAHGVRKRMVFAATDDTDDTIRWLSVSRLTP</sequence>
<gene>
    <name evidence="2" type="primary">endA</name>
    <name type="ordered locus">VNG_2210G</name>
</gene>
<name>ENDA_HALSA</name>
<feature type="chain" id="PRO_0000109485" description="tRNA-splicing endonuclease">
    <location>
        <begin position="1"/>
        <end position="343"/>
    </location>
</feature>
<feature type="active site" evidence="2">
    <location>
        <position position="277"/>
    </location>
</feature>
<feature type="active site" evidence="2">
    <location>
        <position position="288"/>
    </location>
</feature>
<feature type="active site" evidence="2">
    <location>
        <position position="319"/>
    </location>
</feature>
<proteinExistence type="inferred from homology"/>
<reference key="1">
    <citation type="journal article" date="2000" name="Proc. Natl. Acad. Sci. U.S.A.">
        <title>Genome sequence of Halobacterium species NRC-1.</title>
        <authorList>
            <person name="Ng W.V."/>
            <person name="Kennedy S.P."/>
            <person name="Mahairas G.G."/>
            <person name="Berquist B."/>
            <person name="Pan M."/>
            <person name="Shukla H.D."/>
            <person name="Lasky S.R."/>
            <person name="Baliga N.S."/>
            <person name="Thorsson V."/>
            <person name="Sbrogna J."/>
            <person name="Swartzell S."/>
            <person name="Weir D."/>
            <person name="Hall J."/>
            <person name="Dahl T.A."/>
            <person name="Welti R."/>
            <person name="Goo Y.A."/>
            <person name="Leithauser B."/>
            <person name="Keller K."/>
            <person name="Cruz R."/>
            <person name="Danson M.J."/>
            <person name="Hough D.W."/>
            <person name="Maddocks D.G."/>
            <person name="Jablonski P.E."/>
            <person name="Krebs M.P."/>
            <person name="Angevine C.M."/>
            <person name="Dale H."/>
            <person name="Isenbarger T.A."/>
            <person name="Peck R.F."/>
            <person name="Pohlschroder M."/>
            <person name="Spudich J.L."/>
            <person name="Jung K.-H."/>
            <person name="Alam M."/>
            <person name="Freitas T."/>
            <person name="Hou S."/>
            <person name="Daniels C.J."/>
            <person name="Dennis P.P."/>
            <person name="Omer A.D."/>
            <person name="Ebhardt H."/>
            <person name="Lowe T.M."/>
            <person name="Liang P."/>
            <person name="Riley M."/>
            <person name="Hood L."/>
            <person name="DasSarma S."/>
        </authorList>
    </citation>
    <scope>NUCLEOTIDE SEQUENCE [LARGE SCALE GENOMIC DNA]</scope>
    <source>
        <strain>ATCC 700922 / JCM 11081 / NRC-1</strain>
    </source>
</reference>
<accession>Q9HN82</accession>
<keyword id="KW-0456">Lyase</keyword>
<keyword id="KW-1185">Reference proteome</keyword>
<keyword id="KW-0819">tRNA processing</keyword>
<evidence type="ECO:0000250" key="1"/>
<evidence type="ECO:0000255" key="2">
    <source>
        <dbReference type="HAMAP-Rule" id="MF_01834"/>
    </source>
</evidence>
<comment type="function">
    <text evidence="1">Endonuclease that removes tRNA introns. Cleaves pre-tRNA at the 5'- and 3'-splice sites to release the intron. The products are an intron and two tRNA half-molecules bearing 2',3' cyclic phosphate and 5'-OH termini. Recognizes a pseudosymmetric substrate in which 2 bulged loops of 3 bases are separated by a stem of 4 bp (By similarity).</text>
</comment>
<comment type="catalytic activity">
    <reaction evidence="2">
        <text>pretRNA = a 3'-half-tRNA molecule with a 5'-OH end + a 5'-half-tRNA molecule with a 2',3'-cyclic phosphate end + an intron with a 2',3'-cyclic phosphate and a 5'-hydroxyl terminus.</text>
        <dbReference type="EC" id="4.6.1.16"/>
    </reaction>
</comment>
<comment type="subunit">
    <text evidence="2">Homodimer.</text>
</comment>
<comment type="similarity">
    <text evidence="2">Belongs to the tRNA-intron endonuclease family. Archaeal long subfamily.</text>
</comment>